<proteinExistence type="inferred from homology"/>
<gene>
    <name evidence="1" type="primary">rnhA</name>
    <name type="ordered locus">SSPA2337</name>
</gene>
<dbReference type="EC" id="3.1.26.4" evidence="1"/>
<dbReference type="EMBL" id="FM200053">
    <property type="protein sequence ID" value="CAR60568.1"/>
    <property type="molecule type" value="Genomic_DNA"/>
</dbReference>
<dbReference type="RefSeq" id="WP_000917872.1">
    <property type="nucleotide sequence ID" value="NC_011147.1"/>
</dbReference>
<dbReference type="SMR" id="B5BDW5"/>
<dbReference type="KEGG" id="sek:SSPA2337"/>
<dbReference type="HOGENOM" id="CLU_030894_6_0_6"/>
<dbReference type="Proteomes" id="UP000001869">
    <property type="component" value="Chromosome"/>
</dbReference>
<dbReference type="GO" id="GO:0005737">
    <property type="term" value="C:cytoplasm"/>
    <property type="evidence" value="ECO:0007669"/>
    <property type="project" value="UniProtKB-SubCell"/>
</dbReference>
<dbReference type="GO" id="GO:0000287">
    <property type="term" value="F:magnesium ion binding"/>
    <property type="evidence" value="ECO:0007669"/>
    <property type="project" value="UniProtKB-UniRule"/>
</dbReference>
<dbReference type="GO" id="GO:0003676">
    <property type="term" value="F:nucleic acid binding"/>
    <property type="evidence" value="ECO:0007669"/>
    <property type="project" value="InterPro"/>
</dbReference>
<dbReference type="GO" id="GO:0004523">
    <property type="term" value="F:RNA-DNA hybrid ribonuclease activity"/>
    <property type="evidence" value="ECO:0007669"/>
    <property type="project" value="UniProtKB-UniRule"/>
</dbReference>
<dbReference type="GO" id="GO:0043137">
    <property type="term" value="P:DNA replication, removal of RNA primer"/>
    <property type="evidence" value="ECO:0007669"/>
    <property type="project" value="TreeGrafter"/>
</dbReference>
<dbReference type="CDD" id="cd09278">
    <property type="entry name" value="RNase_HI_prokaryote_like"/>
    <property type="match status" value="1"/>
</dbReference>
<dbReference type="FunFam" id="3.30.420.10:FF:000008">
    <property type="entry name" value="Ribonuclease H"/>
    <property type="match status" value="1"/>
</dbReference>
<dbReference type="Gene3D" id="3.30.420.10">
    <property type="entry name" value="Ribonuclease H-like superfamily/Ribonuclease H"/>
    <property type="match status" value="1"/>
</dbReference>
<dbReference type="HAMAP" id="MF_00042">
    <property type="entry name" value="RNase_H"/>
    <property type="match status" value="1"/>
</dbReference>
<dbReference type="InterPro" id="IPR050092">
    <property type="entry name" value="RNase_H"/>
</dbReference>
<dbReference type="InterPro" id="IPR012337">
    <property type="entry name" value="RNaseH-like_sf"/>
</dbReference>
<dbReference type="InterPro" id="IPR002156">
    <property type="entry name" value="RNaseH_domain"/>
</dbReference>
<dbReference type="InterPro" id="IPR036397">
    <property type="entry name" value="RNaseH_sf"/>
</dbReference>
<dbReference type="InterPro" id="IPR022892">
    <property type="entry name" value="RNaseHI"/>
</dbReference>
<dbReference type="NCBIfam" id="NF001236">
    <property type="entry name" value="PRK00203.1"/>
    <property type="match status" value="1"/>
</dbReference>
<dbReference type="PANTHER" id="PTHR10642">
    <property type="entry name" value="RIBONUCLEASE H1"/>
    <property type="match status" value="1"/>
</dbReference>
<dbReference type="PANTHER" id="PTHR10642:SF26">
    <property type="entry name" value="RIBONUCLEASE H1"/>
    <property type="match status" value="1"/>
</dbReference>
<dbReference type="Pfam" id="PF00075">
    <property type="entry name" value="RNase_H"/>
    <property type="match status" value="1"/>
</dbReference>
<dbReference type="SUPFAM" id="SSF53098">
    <property type="entry name" value="Ribonuclease H-like"/>
    <property type="match status" value="1"/>
</dbReference>
<dbReference type="PROSITE" id="PS50879">
    <property type="entry name" value="RNASE_H_1"/>
    <property type="match status" value="1"/>
</dbReference>
<comment type="function">
    <text evidence="1">Endonuclease that specifically degrades the RNA of RNA-DNA hybrids.</text>
</comment>
<comment type="catalytic activity">
    <reaction evidence="1">
        <text>Endonucleolytic cleavage to 5'-phosphomonoester.</text>
        <dbReference type="EC" id="3.1.26.4"/>
    </reaction>
</comment>
<comment type="cofactor">
    <cofactor evidence="1">
        <name>Mg(2+)</name>
        <dbReference type="ChEBI" id="CHEBI:18420"/>
    </cofactor>
    <text evidence="1">Binds 1 Mg(2+) ion per subunit. May bind a second metal ion at a regulatory site, or after substrate binding.</text>
</comment>
<comment type="subunit">
    <text evidence="1">Monomer.</text>
</comment>
<comment type="subcellular location">
    <subcellularLocation>
        <location evidence="1">Cytoplasm</location>
    </subcellularLocation>
</comment>
<comment type="similarity">
    <text evidence="1">Belongs to the RNase H family.</text>
</comment>
<name>RNH_SALPK</name>
<protein>
    <recommendedName>
        <fullName evidence="1">Ribonuclease H</fullName>
        <shortName evidence="1">RNase H</shortName>
        <ecNumber evidence="1">3.1.26.4</ecNumber>
    </recommendedName>
</protein>
<feature type="chain" id="PRO_1000090917" description="Ribonuclease H">
    <location>
        <begin position="1"/>
        <end position="155"/>
    </location>
</feature>
<feature type="domain" description="RNase H type-1" evidence="2">
    <location>
        <begin position="1"/>
        <end position="142"/>
    </location>
</feature>
<feature type="binding site" evidence="1">
    <location>
        <position position="10"/>
    </location>
    <ligand>
        <name>Mg(2+)</name>
        <dbReference type="ChEBI" id="CHEBI:18420"/>
        <label>1</label>
    </ligand>
</feature>
<feature type="binding site" evidence="1">
    <location>
        <position position="10"/>
    </location>
    <ligand>
        <name>Mg(2+)</name>
        <dbReference type="ChEBI" id="CHEBI:18420"/>
        <label>2</label>
    </ligand>
</feature>
<feature type="binding site" evidence="1">
    <location>
        <position position="48"/>
    </location>
    <ligand>
        <name>Mg(2+)</name>
        <dbReference type="ChEBI" id="CHEBI:18420"/>
        <label>1</label>
    </ligand>
</feature>
<feature type="binding site" evidence="1">
    <location>
        <position position="70"/>
    </location>
    <ligand>
        <name>Mg(2+)</name>
        <dbReference type="ChEBI" id="CHEBI:18420"/>
        <label>1</label>
    </ligand>
</feature>
<feature type="binding site" evidence="1">
    <location>
        <position position="134"/>
    </location>
    <ligand>
        <name>Mg(2+)</name>
        <dbReference type="ChEBI" id="CHEBI:18420"/>
        <label>2</label>
    </ligand>
</feature>
<keyword id="KW-0963">Cytoplasm</keyword>
<keyword id="KW-0255">Endonuclease</keyword>
<keyword id="KW-0378">Hydrolase</keyword>
<keyword id="KW-0460">Magnesium</keyword>
<keyword id="KW-0479">Metal-binding</keyword>
<keyword id="KW-0540">Nuclease</keyword>
<organism>
    <name type="scientific">Salmonella paratyphi A (strain AKU_12601)</name>
    <dbReference type="NCBI Taxonomy" id="554290"/>
    <lineage>
        <taxon>Bacteria</taxon>
        <taxon>Pseudomonadati</taxon>
        <taxon>Pseudomonadota</taxon>
        <taxon>Gammaproteobacteria</taxon>
        <taxon>Enterobacterales</taxon>
        <taxon>Enterobacteriaceae</taxon>
        <taxon>Salmonella</taxon>
    </lineage>
</organism>
<sequence length="155" mass="17510">MLKQVEIFTDGSCLGNPGPGGYGAILRYRGHEKTFSEGYTLTTNNRMELMAAIVALEALKEHCEVTLSTDSQYVRQGITQWIHNWKKRGWKTAEKKPVKNVDLWKRLDAALGQHQIKWVWVKGHAGHPENERCDELARAAAMNPTQEDSGYQAEA</sequence>
<evidence type="ECO:0000255" key="1">
    <source>
        <dbReference type="HAMAP-Rule" id="MF_00042"/>
    </source>
</evidence>
<evidence type="ECO:0000255" key="2">
    <source>
        <dbReference type="PROSITE-ProRule" id="PRU00408"/>
    </source>
</evidence>
<accession>B5BDW5</accession>
<reference key="1">
    <citation type="journal article" date="2009" name="BMC Genomics">
        <title>Pseudogene accumulation in the evolutionary histories of Salmonella enterica serovars Paratyphi A and Typhi.</title>
        <authorList>
            <person name="Holt K.E."/>
            <person name="Thomson N.R."/>
            <person name="Wain J."/>
            <person name="Langridge G.C."/>
            <person name="Hasan R."/>
            <person name="Bhutta Z.A."/>
            <person name="Quail M.A."/>
            <person name="Norbertczak H."/>
            <person name="Walker D."/>
            <person name="Simmonds M."/>
            <person name="White B."/>
            <person name="Bason N."/>
            <person name="Mungall K."/>
            <person name="Dougan G."/>
            <person name="Parkhill J."/>
        </authorList>
    </citation>
    <scope>NUCLEOTIDE SEQUENCE [LARGE SCALE GENOMIC DNA]</scope>
    <source>
        <strain>AKU_12601</strain>
    </source>
</reference>